<evidence type="ECO:0000250" key="1"/>
<evidence type="ECO:0000250" key="2">
    <source>
        <dbReference type="UniProtKB" id="Q14061"/>
    </source>
</evidence>
<evidence type="ECO:0000255" key="3">
    <source>
        <dbReference type="PROSITE-ProRule" id="PRU01150"/>
    </source>
</evidence>
<evidence type="ECO:0000256" key="4">
    <source>
        <dbReference type="SAM" id="MobiDB-lite"/>
    </source>
</evidence>
<evidence type="ECO:0000269" key="5">
    <source>
    </source>
</evidence>
<evidence type="ECO:0000305" key="6"/>
<protein>
    <recommendedName>
        <fullName>Cytochrome c oxidase copper chaperone 1</fullName>
    </recommendedName>
    <alternativeName>
        <fullName>Cytochrome c oxidase 17 copper chaperone</fullName>
        <shortName>AtCOX17</shortName>
    </alternativeName>
</protein>
<proteinExistence type="evidence at transcript level"/>
<sequence length="74" mass="8051">MTDQPAQNGLIPPPTSEPSKAAASAETKPKKRICCACPDTKKLRDECIVEHGESACTKWIEAHKICLRAEGFNV</sequence>
<feature type="chain" id="PRO_0000422758" description="Cytochrome c oxidase copper chaperone 1">
    <location>
        <begin position="1"/>
        <end position="74"/>
    </location>
</feature>
<feature type="domain" description="CHCH" evidence="3">
    <location>
        <begin position="34"/>
        <end position="74"/>
    </location>
</feature>
<feature type="region of interest" description="Disordered" evidence="4">
    <location>
        <begin position="1"/>
        <end position="30"/>
    </location>
</feature>
<feature type="short sequence motif" description="Cx9C motif 1" evidence="3">
    <location>
        <begin position="37"/>
        <end position="47"/>
    </location>
</feature>
<feature type="short sequence motif" description="Cx9C motif 2" evidence="3">
    <location>
        <begin position="56"/>
        <end position="66"/>
    </location>
</feature>
<feature type="binding site" evidence="2">
    <location>
        <position position="34"/>
    </location>
    <ligand>
        <name>Cu cation</name>
        <dbReference type="ChEBI" id="CHEBI:23378"/>
    </ligand>
</feature>
<feature type="binding site" evidence="2">
    <location>
        <position position="35"/>
    </location>
    <ligand>
        <name>Cu cation</name>
        <dbReference type="ChEBI" id="CHEBI:23378"/>
    </ligand>
</feature>
<feature type="disulfide bond" evidence="3">
    <location>
        <begin position="37"/>
        <end position="66"/>
    </location>
</feature>
<feature type="disulfide bond" evidence="3">
    <location>
        <begin position="47"/>
        <end position="56"/>
    </location>
</feature>
<comment type="function">
    <text evidence="1 5">Copper chaperone for cytochrome c oxidase (COX). Binds 2 copper ions and delivers them to the Cu(A) site of COX (By similarity). Can complement the yeast mutant cox17.</text>
</comment>
<comment type="subcellular location">
    <subcellularLocation>
        <location>Mitochondrion intermembrane space</location>
    </subcellularLocation>
</comment>
<comment type="induction">
    <text evidence="5">By copper, salicylic acid (SA), nitric oxide (NO) and infection with P.syringae pv. tomato.</text>
</comment>
<comment type="similarity">
    <text evidence="6">Belongs to the COX17 family.</text>
</comment>
<accession>Q9LJQ9</accession>
<organism>
    <name type="scientific">Arabidopsis thaliana</name>
    <name type="common">Mouse-ear cress</name>
    <dbReference type="NCBI Taxonomy" id="3702"/>
    <lineage>
        <taxon>Eukaryota</taxon>
        <taxon>Viridiplantae</taxon>
        <taxon>Streptophyta</taxon>
        <taxon>Embryophyta</taxon>
        <taxon>Tracheophyta</taxon>
        <taxon>Spermatophyta</taxon>
        <taxon>Magnoliopsida</taxon>
        <taxon>eudicotyledons</taxon>
        <taxon>Gunneridae</taxon>
        <taxon>Pentapetalae</taxon>
        <taxon>rosids</taxon>
        <taxon>malvids</taxon>
        <taxon>Brassicales</taxon>
        <taxon>Brassicaceae</taxon>
        <taxon>Camelineae</taxon>
        <taxon>Arabidopsis</taxon>
    </lineage>
</organism>
<keyword id="KW-0143">Chaperone</keyword>
<keyword id="KW-0186">Copper</keyword>
<keyword id="KW-1015">Disulfide bond</keyword>
<keyword id="KW-0479">Metal-binding</keyword>
<keyword id="KW-0496">Mitochondrion</keyword>
<keyword id="KW-1185">Reference proteome</keyword>
<reference key="1">
    <citation type="submission" date="2001-02" db="EMBL/GenBank/DDBJ databases">
        <title>COX17-1, an A. thaliana copper chaperone.</title>
        <authorList>
            <person name="Wintz H."/>
        </authorList>
    </citation>
    <scope>NUCLEOTIDE SEQUENCE [MRNA]</scope>
</reference>
<reference key="2">
    <citation type="journal article" date="2002" name="Plant Physiol.">
        <title>AtCOX17, an Arabidopsis homolog of the yeast copper chaperone COX17.</title>
        <authorList>
            <person name="Balandin T."/>
            <person name="Castresana C."/>
        </authorList>
    </citation>
    <scope>NUCLEOTIDE SEQUENCE [MRNA]</scope>
    <scope>FUNCTION</scope>
    <scope>INDUCTION</scope>
</reference>
<reference key="3">
    <citation type="journal article" date="2000" name="DNA Res.">
        <title>Structural analysis of Arabidopsis thaliana chromosome 3. II. Sequence features of the 4,251,695 bp regions covered by 90 P1, TAC and BAC clones.</title>
        <authorList>
            <person name="Kaneko T."/>
            <person name="Katoh T."/>
            <person name="Sato S."/>
            <person name="Nakamura Y."/>
            <person name="Asamizu E."/>
            <person name="Tabata S."/>
        </authorList>
    </citation>
    <scope>NUCLEOTIDE SEQUENCE [LARGE SCALE GENOMIC DNA]</scope>
    <source>
        <strain>cv. Columbia</strain>
    </source>
</reference>
<reference key="4">
    <citation type="journal article" date="2017" name="Plant J.">
        <title>Araport11: a complete reannotation of the Arabidopsis thaliana reference genome.</title>
        <authorList>
            <person name="Cheng C.Y."/>
            <person name="Krishnakumar V."/>
            <person name="Chan A.P."/>
            <person name="Thibaud-Nissen F."/>
            <person name="Schobel S."/>
            <person name="Town C.D."/>
        </authorList>
    </citation>
    <scope>GENOME REANNOTATION</scope>
    <source>
        <strain>cv. Columbia</strain>
    </source>
</reference>
<reference key="5">
    <citation type="submission" date="2006-02" db="EMBL/GenBank/DDBJ databases">
        <title>Arabidopsis ORF clones.</title>
        <authorList>
            <person name="Shinn P."/>
            <person name="Chen H."/>
            <person name="Kim C.J."/>
            <person name="Ecker J.R."/>
        </authorList>
    </citation>
    <scope>NUCLEOTIDE SEQUENCE [LARGE SCALE MRNA]</scope>
    <source>
        <strain>cv. Columbia</strain>
    </source>
</reference>
<dbReference type="EMBL" id="AF349684">
    <property type="protein sequence ID" value="AAK73496.1"/>
    <property type="molecule type" value="mRNA"/>
</dbReference>
<dbReference type="EMBL" id="AF505654">
    <property type="protein sequence ID" value="AAM95390.1"/>
    <property type="molecule type" value="mRNA"/>
</dbReference>
<dbReference type="EMBL" id="AP000413">
    <property type="protein sequence ID" value="BAB02169.1"/>
    <property type="molecule type" value="Genomic_DNA"/>
</dbReference>
<dbReference type="EMBL" id="CP002686">
    <property type="protein sequence ID" value="AEE75654.1"/>
    <property type="molecule type" value="Genomic_DNA"/>
</dbReference>
<dbReference type="EMBL" id="BT024522">
    <property type="protein sequence ID" value="ABD38861.1"/>
    <property type="molecule type" value="mRNA"/>
</dbReference>
<dbReference type="RefSeq" id="NP_566508.1">
    <property type="nucleotide sequence ID" value="NM_112400.3"/>
</dbReference>
<dbReference type="SMR" id="Q9LJQ9"/>
<dbReference type="FunCoup" id="Q9LJQ9">
    <property type="interactions" value="1639"/>
</dbReference>
<dbReference type="STRING" id="3702.Q9LJQ9"/>
<dbReference type="iPTMnet" id="Q9LJQ9"/>
<dbReference type="PaxDb" id="3702-AT3G15352.1"/>
<dbReference type="ProteomicsDB" id="220509"/>
<dbReference type="EnsemblPlants" id="AT3G15352.1">
    <property type="protein sequence ID" value="AT3G15352.1"/>
    <property type="gene ID" value="AT3G15352"/>
</dbReference>
<dbReference type="GeneID" id="820770"/>
<dbReference type="Gramene" id="AT3G15352.1">
    <property type="protein sequence ID" value="AT3G15352.1"/>
    <property type="gene ID" value="AT3G15352"/>
</dbReference>
<dbReference type="KEGG" id="ath:AT3G15352"/>
<dbReference type="Araport" id="AT3G15352"/>
<dbReference type="TAIR" id="AT3G15352">
    <property type="gene designation" value="COX17"/>
</dbReference>
<dbReference type="eggNOG" id="KOG3496">
    <property type="taxonomic scope" value="Eukaryota"/>
</dbReference>
<dbReference type="HOGENOM" id="CLU_149618_1_0_1"/>
<dbReference type="InParanoid" id="Q9LJQ9"/>
<dbReference type="OMA" id="EAPRICL"/>
<dbReference type="OrthoDB" id="1915887at2759"/>
<dbReference type="PhylomeDB" id="Q9LJQ9"/>
<dbReference type="PRO" id="PR:Q9LJQ9"/>
<dbReference type="Proteomes" id="UP000006548">
    <property type="component" value="Chromosome 3"/>
</dbReference>
<dbReference type="ExpressionAtlas" id="Q9LJQ9">
    <property type="expression patterns" value="baseline and differential"/>
</dbReference>
<dbReference type="GO" id="GO:0005758">
    <property type="term" value="C:mitochondrial intermembrane space"/>
    <property type="evidence" value="ECO:0007669"/>
    <property type="project" value="UniProtKB-SubCell"/>
</dbReference>
<dbReference type="GO" id="GO:0016531">
    <property type="term" value="F:copper chaperone activity"/>
    <property type="evidence" value="ECO:0007669"/>
    <property type="project" value="InterPro"/>
</dbReference>
<dbReference type="GO" id="GO:0005507">
    <property type="term" value="F:copper ion binding"/>
    <property type="evidence" value="ECO:0007669"/>
    <property type="project" value="InterPro"/>
</dbReference>
<dbReference type="GO" id="GO:0009617">
    <property type="term" value="P:response to bacterium"/>
    <property type="evidence" value="ECO:0000270"/>
    <property type="project" value="TAIR"/>
</dbReference>
<dbReference type="GO" id="GO:0046688">
    <property type="term" value="P:response to copper ion"/>
    <property type="evidence" value="ECO:0000270"/>
    <property type="project" value="TAIR"/>
</dbReference>
<dbReference type="FunFam" id="1.10.287.1130:FF:000003">
    <property type="entry name" value="Cytochrome c oxidase copper chaperone"/>
    <property type="match status" value="1"/>
</dbReference>
<dbReference type="Gene3D" id="1.10.287.1130">
    <property type="entry name" value="CytochromE C oxidase copper chaperone"/>
    <property type="match status" value="1"/>
</dbReference>
<dbReference type="InterPro" id="IPR009069">
    <property type="entry name" value="Cys_alpha_HP_mot_SF"/>
</dbReference>
<dbReference type="InterPro" id="IPR007745">
    <property type="entry name" value="Cyt_c_oxidase_Cu-chaperone"/>
</dbReference>
<dbReference type="PANTHER" id="PTHR16719">
    <property type="entry name" value="CYTOCHROME C OXIDASE COPPER CHAPERONE"/>
    <property type="match status" value="1"/>
</dbReference>
<dbReference type="PANTHER" id="PTHR16719:SF12">
    <property type="entry name" value="CYTOCHROME C OXIDASE COPPER CHAPERONE 1"/>
    <property type="match status" value="1"/>
</dbReference>
<dbReference type="Pfam" id="PF05051">
    <property type="entry name" value="COX17"/>
    <property type="match status" value="1"/>
</dbReference>
<dbReference type="SUPFAM" id="SSF47072">
    <property type="entry name" value="Cysteine alpha-hairpin motif"/>
    <property type="match status" value="1"/>
</dbReference>
<dbReference type="PROSITE" id="PS51808">
    <property type="entry name" value="CHCH"/>
    <property type="match status" value="1"/>
</dbReference>
<name>CX171_ARATH</name>
<gene>
    <name type="primary">COX17-1</name>
    <name type="synonym">COX17</name>
    <name type="ordered locus">At3g15352</name>
    <name type="ORF">K7L4.21</name>
</gene>